<keyword id="KW-0997">Cell inner membrane</keyword>
<keyword id="KW-1003">Cell membrane</keyword>
<keyword id="KW-0407">Ion channel</keyword>
<keyword id="KW-0406">Ion transport</keyword>
<keyword id="KW-0472">Membrane</keyword>
<keyword id="KW-0479">Metal-binding</keyword>
<keyword id="KW-1185">Reference proteome</keyword>
<keyword id="KW-0915">Sodium</keyword>
<keyword id="KW-0812">Transmembrane</keyword>
<keyword id="KW-1133">Transmembrane helix</keyword>
<keyword id="KW-0813">Transport</keyword>
<name>FLUC_IGNH4</name>
<accession>A8AAZ9</accession>
<feature type="chain" id="PRO_1000026396" description="Fluoride-specific ion channel FluC">
    <location>
        <begin position="1"/>
        <end position="123"/>
    </location>
</feature>
<feature type="transmembrane region" description="Helical" evidence="1">
    <location>
        <begin position="5"/>
        <end position="25"/>
    </location>
</feature>
<feature type="transmembrane region" description="Helical" evidence="1">
    <location>
        <begin position="33"/>
        <end position="53"/>
    </location>
</feature>
<feature type="transmembrane region" description="Helical" evidence="1">
    <location>
        <begin position="62"/>
        <end position="82"/>
    </location>
</feature>
<feature type="transmembrane region" description="Helical" evidence="1">
    <location>
        <begin position="94"/>
        <end position="114"/>
    </location>
</feature>
<feature type="binding site" evidence="1">
    <location>
        <position position="72"/>
    </location>
    <ligand>
        <name>Na(+)</name>
        <dbReference type="ChEBI" id="CHEBI:29101"/>
        <note>structural</note>
    </ligand>
</feature>
<feature type="binding site" evidence="1">
    <location>
        <position position="75"/>
    </location>
    <ligand>
        <name>Na(+)</name>
        <dbReference type="ChEBI" id="CHEBI:29101"/>
        <note>structural</note>
    </ligand>
</feature>
<proteinExistence type="inferred from homology"/>
<organism>
    <name type="scientific">Ignicoccus hospitalis (strain KIN4/I / DSM 18386 / JCM 14125)</name>
    <dbReference type="NCBI Taxonomy" id="453591"/>
    <lineage>
        <taxon>Archaea</taxon>
        <taxon>Thermoproteota</taxon>
        <taxon>Thermoprotei</taxon>
        <taxon>Desulfurococcales</taxon>
        <taxon>Desulfurococcaceae</taxon>
        <taxon>Ignicoccus</taxon>
    </lineage>
</organism>
<sequence length="123" mass="13286">MKALVWVAVGGALGAIVRYFFYKFVPQVYDFPLATFLVNVVASFLLGFIIGAFEAKPWGQQLKLALATGFCGALSTFSTFAADNYILLRSSKYITAFVYTAVSVGLGIVSVALGEDLAQRLLK</sequence>
<evidence type="ECO:0000255" key="1">
    <source>
        <dbReference type="HAMAP-Rule" id="MF_00454"/>
    </source>
</evidence>
<protein>
    <recommendedName>
        <fullName evidence="1">Fluoride-specific ion channel FluC</fullName>
    </recommendedName>
</protein>
<comment type="function">
    <text evidence="1">Fluoride-specific ion channel. Important for reducing fluoride concentration in the cell, thus reducing its toxicity.</text>
</comment>
<comment type="catalytic activity">
    <reaction evidence="1">
        <text>fluoride(in) = fluoride(out)</text>
        <dbReference type="Rhea" id="RHEA:76159"/>
        <dbReference type="ChEBI" id="CHEBI:17051"/>
    </reaction>
    <physiologicalReaction direction="left-to-right" evidence="1">
        <dbReference type="Rhea" id="RHEA:76160"/>
    </physiologicalReaction>
</comment>
<comment type="activity regulation">
    <text evidence="1">Na(+) is not transported, but it plays an essential structural role and its presence is essential for fluoride channel function.</text>
</comment>
<comment type="subcellular location">
    <subcellularLocation>
        <location evidence="1">Cell inner membrane</location>
        <topology evidence="1">Multi-pass membrane protein</topology>
    </subcellularLocation>
</comment>
<comment type="similarity">
    <text evidence="1">Belongs to the fluoride channel Fluc/FEX (TC 1.A.43) family.</text>
</comment>
<dbReference type="EMBL" id="CP000816">
    <property type="protein sequence ID" value="ABU82101.1"/>
    <property type="molecule type" value="Genomic_DNA"/>
</dbReference>
<dbReference type="RefSeq" id="WP_012123065.1">
    <property type="nucleotide sequence ID" value="NC_009776.1"/>
</dbReference>
<dbReference type="SMR" id="A8AAZ9"/>
<dbReference type="STRING" id="453591.Igni_0921"/>
<dbReference type="GeneID" id="5562546"/>
<dbReference type="KEGG" id="iho:Igni_0921"/>
<dbReference type="eggNOG" id="arCOG04701">
    <property type="taxonomic scope" value="Archaea"/>
</dbReference>
<dbReference type="HOGENOM" id="CLU_114342_2_1_2"/>
<dbReference type="OrthoDB" id="253428at2157"/>
<dbReference type="PhylomeDB" id="A8AAZ9"/>
<dbReference type="Proteomes" id="UP000000262">
    <property type="component" value="Chromosome"/>
</dbReference>
<dbReference type="GO" id="GO:0005886">
    <property type="term" value="C:plasma membrane"/>
    <property type="evidence" value="ECO:0007669"/>
    <property type="project" value="UniProtKB-SubCell"/>
</dbReference>
<dbReference type="GO" id="GO:0062054">
    <property type="term" value="F:fluoride channel activity"/>
    <property type="evidence" value="ECO:0007669"/>
    <property type="project" value="UniProtKB-UniRule"/>
</dbReference>
<dbReference type="GO" id="GO:0046872">
    <property type="term" value="F:metal ion binding"/>
    <property type="evidence" value="ECO:0007669"/>
    <property type="project" value="UniProtKB-KW"/>
</dbReference>
<dbReference type="GO" id="GO:0140114">
    <property type="term" value="P:cellular detoxification of fluoride"/>
    <property type="evidence" value="ECO:0007669"/>
    <property type="project" value="UniProtKB-UniRule"/>
</dbReference>
<dbReference type="HAMAP" id="MF_00454">
    <property type="entry name" value="FluC"/>
    <property type="match status" value="1"/>
</dbReference>
<dbReference type="InterPro" id="IPR003691">
    <property type="entry name" value="FluC"/>
</dbReference>
<dbReference type="NCBIfam" id="TIGR00494">
    <property type="entry name" value="crcB"/>
    <property type="match status" value="1"/>
</dbReference>
<dbReference type="PANTHER" id="PTHR28259">
    <property type="entry name" value="FLUORIDE EXPORT PROTEIN 1-RELATED"/>
    <property type="match status" value="1"/>
</dbReference>
<dbReference type="PANTHER" id="PTHR28259:SF1">
    <property type="entry name" value="FLUORIDE EXPORT PROTEIN 1-RELATED"/>
    <property type="match status" value="1"/>
</dbReference>
<dbReference type="Pfam" id="PF02537">
    <property type="entry name" value="CRCB"/>
    <property type="match status" value="1"/>
</dbReference>
<reference key="1">
    <citation type="journal article" date="2008" name="Genome Biol.">
        <title>A genomic analysis of the archaeal system Ignicoccus hospitalis-Nanoarchaeum equitans.</title>
        <authorList>
            <person name="Podar M."/>
            <person name="Anderson I."/>
            <person name="Makarova K.S."/>
            <person name="Elkins J.G."/>
            <person name="Ivanova N."/>
            <person name="Wall M.A."/>
            <person name="Lykidis A."/>
            <person name="Mavromatis K."/>
            <person name="Sun H."/>
            <person name="Hudson M.E."/>
            <person name="Chen W."/>
            <person name="Deciu C."/>
            <person name="Hutchison D."/>
            <person name="Eads J.R."/>
            <person name="Anderson A."/>
            <person name="Fernandes F."/>
            <person name="Szeto E."/>
            <person name="Lapidus A."/>
            <person name="Kyrpides N.C."/>
            <person name="Saier M.H. Jr."/>
            <person name="Richardson P.M."/>
            <person name="Rachel R."/>
            <person name="Huber H."/>
            <person name="Eisen J.A."/>
            <person name="Koonin E.V."/>
            <person name="Keller M."/>
            <person name="Stetter K.O."/>
        </authorList>
    </citation>
    <scope>NUCLEOTIDE SEQUENCE [LARGE SCALE GENOMIC DNA]</scope>
    <source>
        <strain>KIN4/I / DSM 18386 / JCM 14125</strain>
    </source>
</reference>
<gene>
    <name evidence="1" type="primary">fluC</name>
    <name evidence="1" type="synonym">crcB</name>
    <name type="ordered locus">Igni_0921</name>
</gene>